<comment type="similarity">
    <text evidence="1">Belongs to the universal ribosomal protein uL29 family.</text>
</comment>
<protein>
    <recommendedName>
        <fullName evidence="1">Large ribosomal subunit protein uL29</fullName>
    </recommendedName>
    <alternativeName>
        <fullName evidence="2">50S ribosomal protein L29</fullName>
    </alternativeName>
</protein>
<evidence type="ECO:0000255" key="1">
    <source>
        <dbReference type="HAMAP-Rule" id="MF_00374"/>
    </source>
</evidence>
<evidence type="ECO:0000305" key="2"/>
<reference key="1">
    <citation type="journal article" date="2007" name="Genes Dev.">
        <title>New insights into Acinetobacter baumannii pathogenesis revealed by high-density pyrosequencing and transposon mutagenesis.</title>
        <authorList>
            <person name="Smith M.G."/>
            <person name="Gianoulis T.A."/>
            <person name="Pukatzki S."/>
            <person name="Mekalanos J.J."/>
            <person name="Ornston L.N."/>
            <person name="Gerstein M."/>
            <person name="Snyder M."/>
        </authorList>
    </citation>
    <scope>NUCLEOTIDE SEQUENCE [LARGE SCALE GENOMIC DNA]</scope>
    <source>
        <strain>ATCC 17978 / DSM 105126 / CIP 53.77 / LMG 1025 / NCDC KC755 / 5377</strain>
    </source>
</reference>
<dbReference type="EMBL" id="CP000521">
    <property type="protein sequence ID" value="ABO13470.1"/>
    <property type="molecule type" value="Genomic_DNA"/>
</dbReference>
<dbReference type="RefSeq" id="WP_000849928.1">
    <property type="nucleotide sequence ID" value="NZ_CP053098.1"/>
</dbReference>
<dbReference type="SMR" id="A3M976"/>
<dbReference type="GeneID" id="9380824"/>
<dbReference type="KEGG" id="acb:A1S_3073"/>
<dbReference type="HOGENOM" id="CLU_158491_1_2_6"/>
<dbReference type="GO" id="GO:0022625">
    <property type="term" value="C:cytosolic large ribosomal subunit"/>
    <property type="evidence" value="ECO:0007669"/>
    <property type="project" value="TreeGrafter"/>
</dbReference>
<dbReference type="GO" id="GO:0003735">
    <property type="term" value="F:structural constituent of ribosome"/>
    <property type="evidence" value="ECO:0007669"/>
    <property type="project" value="InterPro"/>
</dbReference>
<dbReference type="GO" id="GO:0006412">
    <property type="term" value="P:translation"/>
    <property type="evidence" value="ECO:0007669"/>
    <property type="project" value="UniProtKB-UniRule"/>
</dbReference>
<dbReference type="CDD" id="cd00427">
    <property type="entry name" value="Ribosomal_L29_HIP"/>
    <property type="match status" value="1"/>
</dbReference>
<dbReference type="FunFam" id="1.10.287.310:FF:000001">
    <property type="entry name" value="50S ribosomal protein L29"/>
    <property type="match status" value="1"/>
</dbReference>
<dbReference type="Gene3D" id="1.10.287.310">
    <property type="match status" value="1"/>
</dbReference>
<dbReference type="HAMAP" id="MF_00374">
    <property type="entry name" value="Ribosomal_uL29"/>
    <property type="match status" value="1"/>
</dbReference>
<dbReference type="InterPro" id="IPR050063">
    <property type="entry name" value="Ribosomal_protein_uL29"/>
</dbReference>
<dbReference type="InterPro" id="IPR001854">
    <property type="entry name" value="Ribosomal_uL29"/>
</dbReference>
<dbReference type="InterPro" id="IPR036049">
    <property type="entry name" value="Ribosomal_uL29_sf"/>
</dbReference>
<dbReference type="NCBIfam" id="TIGR00012">
    <property type="entry name" value="L29"/>
    <property type="match status" value="1"/>
</dbReference>
<dbReference type="PANTHER" id="PTHR10916">
    <property type="entry name" value="60S RIBOSOMAL PROTEIN L35/50S RIBOSOMAL PROTEIN L29"/>
    <property type="match status" value="1"/>
</dbReference>
<dbReference type="PANTHER" id="PTHR10916:SF0">
    <property type="entry name" value="LARGE RIBOSOMAL SUBUNIT PROTEIN UL29C"/>
    <property type="match status" value="1"/>
</dbReference>
<dbReference type="Pfam" id="PF00831">
    <property type="entry name" value="Ribosomal_L29"/>
    <property type="match status" value="1"/>
</dbReference>
<dbReference type="SUPFAM" id="SSF46561">
    <property type="entry name" value="Ribosomal protein L29 (L29p)"/>
    <property type="match status" value="1"/>
</dbReference>
<accession>A3M976</accession>
<proteinExistence type="inferred from homology"/>
<keyword id="KW-0687">Ribonucleoprotein</keyword>
<keyword id="KW-0689">Ribosomal protein</keyword>
<gene>
    <name evidence="1" type="primary">rpmC</name>
    <name type="ordered locus">A1S_3073</name>
</gene>
<organism>
    <name type="scientific">Acinetobacter baumannii (strain ATCC 17978 / DSM 105126 / CIP 53.77 / LMG 1025 / NCDC KC755 / 5377)</name>
    <dbReference type="NCBI Taxonomy" id="400667"/>
    <lineage>
        <taxon>Bacteria</taxon>
        <taxon>Pseudomonadati</taxon>
        <taxon>Pseudomonadota</taxon>
        <taxon>Gammaproteobacteria</taxon>
        <taxon>Moraxellales</taxon>
        <taxon>Moraxellaceae</taxon>
        <taxon>Acinetobacter</taxon>
        <taxon>Acinetobacter calcoaceticus/baumannii complex</taxon>
    </lineage>
</organism>
<sequence>MKTKDLREKSVEELKALLDEQQLNQFRLRMAKATGQLGKSHEVQVARKTIARIKTLLTEKQGNGQ</sequence>
<name>RL29_ACIBT</name>
<feature type="chain" id="PRO_1000007409" description="Large ribosomal subunit protein uL29">
    <location>
        <begin position="1"/>
        <end position="65"/>
    </location>
</feature>